<comment type="function">
    <text evidence="6">May function as positive regulator of plant growth.</text>
</comment>
<comment type="subcellular location">
    <subcellularLocation>
        <location evidence="1">Nucleus</location>
    </subcellularLocation>
</comment>
<comment type="miscellaneous">
    <text evidence="3">Plants over-expressing VQ17 show stunted growth phenotype.</text>
</comment>
<keyword id="KW-0539">Nucleus</keyword>
<keyword id="KW-1185">Reference proteome</keyword>
<protein>
    <recommendedName>
        <fullName evidence="4">VQ motif-containing protein 17</fullName>
        <shortName evidence="4">AtVQ17</shortName>
    </recommendedName>
</protein>
<sequence length="172" mass="19497">MEIEATTVQKRRSLPTIAMHKQSRTLTKSKPKIRIIHIFAPEIIKTDVANFREIVQNLTGKQDHHHHDLPHQKGLKRNPRSRRSHDHHEVHDMNKSHGFCINSDEEEEGMVSMTWNGNGDESSGGFLNGLGDLDGFIQELGEFPYLPFTIDPAVASSSHLHGNVFAEPHHYA</sequence>
<feature type="chain" id="PRO_0000432314" description="VQ motif-containing protein 17">
    <location>
        <begin position="1"/>
        <end position="172"/>
    </location>
</feature>
<feature type="region of interest" description="Disordered" evidence="2">
    <location>
        <begin position="60"/>
        <end position="97"/>
    </location>
</feature>
<feature type="short sequence motif" description="VQ" evidence="5">
    <location>
        <begin position="51"/>
        <end position="60"/>
    </location>
</feature>
<feature type="compositionally biased region" description="Basic and acidic residues" evidence="2">
    <location>
        <begin position="61"/>
        <end position="71"/>
    </location>
</feature>
<feature type="compositionally biased region" description="Basic residues" evidence="2">
    <location>
        <begin position="72"/>
        <end position="85"/>
    </location>
</feature>
<feature type="compositionally biased region" description="Basic and acidic residues" evidence="2">
    <location>
        <begin position="86"/>
        <end position="95"/>
    </location>
</feature>
<reference key="1">
    <citation type="journal article" date="1999" name="Nature">
        <title>Sequence and analysis of chromosome 2 of the plant Arabidopsis thaliana.</title>
        <authorList>
            <person name="Lin X."/>
            <person name="Kaul S."/>
            <person name="Rounsley S.D."/>
            <person name="Shea T.P."/>
            <person name="Benito M.-I."/>
            <person name="Town C.D."/>
            <person name="Fujii C.Y."/>
            <person name="Mason T.M."/>
            <person name="Bowman C.L."/>
            <person name="Barnstead M.E."/>
            <person name="Feldblyum T.V."/>
            <person name="Buell C.R."/>
            <person name="Ketchum K.A."/>
            <person name="Lee J.J."/>
            <person name="Ronning C.M."/>
            <person name="Koo H.L."/>
            <person name="Moffat K.S."/>
            <person name="Cronin L.A."/>
            <person name="Shen M."/>
            <person name="Pai G."/>
            <person name="Van Aken S."/>
            <person name="Umayam L."/>
            <person name="Tallon L.J."/>
            <person name="Gill J.E."/>
            <person name="Adams M.D."/>
            <person name="Carrera A.J."/>
            <person name="Creasy T.H."/>
            <person name="Goodman H.M."/>
            <person name="Somerville C.R."/>
            <person name="Copenhaver G.P."/>
            <person name="Preuss D."/>
            <person name="Nierman W.C."/>
            <person name="White O."/>
            <person name="Eisen J.A."/>
            <person name="Salzberg S.L."/>
            <person name="Fraser C.M."/>
            <person name="Venter J.C."/>
        </authorList>
    </citation>
    <scope>NUCLEOTIDE SEQUENCE [LARGE SCALE GENOMIC DNA]</scope>
    <source>
        <strain>cv. Columbia</strain>
    </source>
</reference>
<reference key="2">
    <citation type="journal article" date="2017" name="Plant J.">
        <title>Araport11: a complete reannotation of the Arabidopsis thaliana reference genome.</title>
        <authorList>
            <person name="Cheng C.Y."/>
            <person name="Krishnakumar V."/>
            <person name="Chan A.P."/>
            <person name="Thibaud-Nissen F."/>
            <person name="Schobel S."/>
            <person name="Town C.D."/>
        </authorList>
    </citation>
    <scope>GENOME REANNOTATION</scope>
    <source>
        <strain>cv. Columbia</strain>
    </source>
</reference>
<reference key="3">
    <citation type="journal article" date="2002" name="Plant Physiol.">
        <title>Cloning and sequencing of cDNAs for hypothetical genes from chromosome 2 of Arabidopsis.</title>
        <authorList>
            <person name="Xiao Y.-L."/>
            <person name="Malik M."/>
            <person name="Whitelaw C.A."/>
            <person name="Town C.D."/>
        </authorList>
    </citation>
    <scope>NUCLEOTIDE SEQUENCE [LARGE SCALE MRNA]</scope>
    <source>
        <strain>cv. Columbia</strain>
    </source>
</reference>
<reference key="4">
    <citation type="journal article" date="2003" name="Science">
        <title>Empirical analysis of transcriptional activity in the Arabidopsis genome.</title>
        <authorList>
            <person name="Yamada K."/>
            <person name="Lim J."/>
            <person name="Dale J.M."/>
            <person name="Chen H."/>
            <person name="Shinn P."/>
            <person name="Palm C.J."/>
            <person name="Southwick A.M."/>
            <person name="Wu H.C."/>
            <person name="Kim C.J."/>
            <person name="Nguyen M."/>
            <person name="Pham P.K."/>
            <person name="Cheuk R.F."/>
            <person name="Karlin-Newmann G."/>
            <person name="Liu S.X."/>
            <person name="Lam B."/>
            <person name="Sakano H."/>
            <person name="Wu T."/>
            <person name="Yu G."/>
            <person name="Miranda M."/>
            <person name="Quach H.L."/>
            <person name="Tripp M."/>
            <person name="Chang C.H."/>
            <person name="Lee J.M."/>
            <person name="Toriumi M.J."/>
            <person name="Chan M.M."/>
            <person name="Tang C.C."/>
            <person name="Onodera C.S."/>
            <person name="Deng J.M."/>
            <person name="Akiyama K."/>
            <person name="Ansari Y."/>
            <person name="Arakawa T."/>
            <person name="Banh J."/>
            <person name="Banno F."/>
            <person name="Bowser L."/>
            <person name="Brooks S.Y."/>
            <person name="Carninci P."/>
            <person name="Chao Q."/>
            <person name="Choy N."/>
            <person name="Enju A."/>
            <person name="Goldsmith A.D."/>
            <person name="Gurjal M."/>
            <person name="Hansen N.F."/>
            <person name="Hayashizaki Y."/>
            <person name="Johnson-Hopson C."/>
            <person name="Hsuan V.W."/>
            <person name="Iida K."/>
            <person name="Karnes M."/>
            <person name="Khan S."/>
            <person name="Koesema E."/>
            <person name="Ishida J."/>
            <person name="Jiang P.X."/>
            <person name="Jones T."/>
            <person name="Kawai J."/>
            <person name="Kamiya A."/>
            <person name="Meyers C."/>
            <person name="Nakajima M."/>
            <person name="Narusaka M."/>
            <person name="Seki M."/>
            <person name="Sakurai T."/>
            <person name="Satou M."/>
            <person name="Tamse R."/>
            <person name="Vaysberg M."/>
            <person name="Wallender E.K."/>
            <person name="Wong C."/>
            <person name="Yamamura Y."/>
            <person name="Yuan S."/>
            <person name="Shinozaki K."/>
            <person name="Davis R.W."/>
            <person name="Theologis A."/>
            <person name="Ecker J.R."/>
        </authorList>
    </citation>
    <scope>NUCLEOTIDE SEQUENCE [LARGE SCALE MRNA]</scope>
    <source>
        <strain>cv. Columbia</strain>
    </source>
</reference>
<reference key="5">
    <citation type="submission" date="2005-03" db="EMBL/GenBank/DDBJ databases">
        <authorList>
            <person name="Underwood B.A."/>
            <person name="Xiao Y.-L."/>
            <person name="Moskal W.A. Jr."/>
            <person name="Monaghan E.L."/>
            <person name="Wang W."/>
            <person name="Redman J.C."/>
            <person name="Wu H.C."/>
            <person name="Utterback T."/>
            <person name="Town C.D."/>
        </authorList>
    </citation>
    <scope>NUCLEOTIDE SEQUENCE [LARGE SCALE MRNA]</scope>
    <source>
        <strain>cv. Columbia</strain>
    </source>
</reference>
<reference key="6">
    <citation type="journal article" date="2012" name="Plant Physiol.">
        <title>Structural and functional analysis of VQ motif-containing proteins in Arabidopsis as interacting proteins of WRKY transcription factors.</title>
        <authorList>
            <person name="Cheng Y."/>
            <person name="Zhou Y."/>
            <person name="Yang Y."/>
            <person name="Chi Y.J."/>
            <person name="Zhou J."/>
            <person name="Chen J.Y."/>
            <person name="Wang F."/>
            <person name="Fan B."/>
            <person name="Shi K."/>
            <person name="Zhou Y.H."/>
            <person name="Yu J.Q."/>
            <person name="Chen Z."/>
        </authorList>
    </citation>
    <scope>FUNCTION</scope>
    <scope>GENE FAMILY</scope>
    <scope>NOMENCLATURE</scope>
</reference>
<dbReference type="EMBL" id="AC002561">
    <property type="protein sequence ID" value="AAB88639.1"/>
    <property type="molecule type" value="Genomic_DNA"/>
</dbReference>
<dbReference type="EMBL" id="CP002685">
    <property type="protein sequence ID" value="AEC10079.1"/>
    <property type="molecule type" value="Genomic_DNA"/>
</dbReference>
<dbReference type="EMBL" id="AY102560">
    <property type="protein sequence ID" value="AAM76765.1"/>
    <property type="molecule type" value="mRNA"/>
</dbReference>
<dbReference type="EMBL" id="AY074648">
    <property type="protein sequence ID" value="AAL69464.1"/>
    <property type="molecule type" value="mRNA"/>
</dbReference>
<dbReference type="EMBL" id="AY954829">
    <property type="protein sequence ID" value="AAX55155.1"/>
    <property type="molecule type" value="Genomic_DNA"/>
</dbReference>
<dbReference type="PIR" id="T00924">
    <property type="entry name" value="T00924"/>
</dbReference>
<dbReference type="RefSeq" id="NP_181744.1">
    <property type="nucleotide sequence ID" value="NM_129777.4"/>
</dbReference>
<dbReference type="STRING" id="3702.O48522"/>
<dbReference type="PaxDb" id="3702-AT2G42140.1"/>
<dbReference type="EnsemblPlants" id="AT2G42140.1">
    <property type="protein sequence ID" value="AT2G42140.1"/>
    <property type="gene ID" value="AT2G42140"/>
</dbReference>
<dbReference type="GeneID" id="818814"/>
<dbReference type="Gramene" id="AT2G42140.1">
    <property type="protein sequence ID" value="AT2G42140.1"/>
    <property type="gene ID" value="AT2G42140"/>
</dbReference>
<dbReference type="KEGG" id="ath:AT2G42140"/>
<dbReference type="Araport" id="AT2G42140"/>
<dbReference type="TAIR" id="AT2G42140"/>
<dbReference type="eggNOG" id="ENOG502S3AS">
    <property type="taxonomic scope" value="Eukaryota"/>
</dbReference>
<dbReference type="HOGENOM" id="CLU_111794_1_0_1"/>
<dbReference type="InParanoid" id="O48522"/>
<dbReference type="OMA" id="AESHQFA"/>
<dbReference type="PhylomeDB" id="O48522"/>
<dbReference type="PRO" id="PR:O48522"/>
<dbReference type="Proteomes" id="UP000006548">
    <property type="component" value="Chromosome 2"/>
</dbReference>
<dbReference type="ExpressionAtlas" id="O48522">
    <property type="expression patterns" value="baseline and differential"/>
</dbReference>
<dbReference type="GO" id="GO:0005634">
    <property type="term" value="C:nucleus"/>
    <property type="evidence" value="ECO:0007669"/>
    <property type="project" value="UniProtKB-SubCell"/>
</dbReference>
<dbReference type="InterPro" id="IPR008889">
    <property type="entry name" value="VQ"/>
</dbReference>
<dbReference type="InterPro" id="IPR039607">
    <property type="entry name" value="VQ_8/17/18/20/21/25"/>
</dbReference>
<dbReference type="PANTHER" id="PTHR33143">
    <property type="entry name" value="F16F4.1 PROTEIN-RELATED"/>
    <property type="match status" value="1"/>
</dbReference>
<dbReference type="PANTHER" id="PTHR33143:SF3">
    <property type="entry name" value="VQ MOTIF-CONTAINING PROTEIN 17-RELATED"/>
    <property type="match status" value="1"/>
</dbReference>
<dbReference type="Pfam" id="PF05678">
    <property type="entry name" value="VQ"/>
    <property type="match status" value="1"/>
</dbReference>
<evidence type="ECO:0000250" key="1">
    <source>
        <dbReference type="UniProtKB" id="Q9M9F0"/>
    </source>
</evidence>
<evidence type="ECO:0000256" key="2">
    <source>
        <dbReference type="SAM" id="MobiDB-lite"/>
    </source>
</evidence>
<evidence type="ECO:0000269" key="3">
    <source>
    </source>
</evidence>
<evidence type="ECO:0000303" key="4">
    <source>
    </source>
</evidence>
<evidence type="ECO:0000305" key="5"/>
<evidence type="ECO:0000305" key="6">
    <source>
    </source>
</evidence>
<evidence type="ECO:0000312" key="7">
    <source>
        <dbReference type="Araport" id="AT2G42140"/>
    </source>
</evidence>
<evidence type="ECO:0000312" key="8">
    <source>
        <dbReference type="EMBL" id="AAB88639.1"/>
    </source>
</evidence>
<organism>
    <name type="scientific">Arabidopsis thaliana</name>
    <name type="common">Mouse-ear cress</name>
    <dbReference type="NCBI Taxonomy" id="3702"/>
    <lineage>
        <taxon>Eukaryota</taxon>
        <taxon>Viridiplantae</taxon>
        <taxon>Streptophyta</taxon>
        <taxon>Embryophyta</taxon>
        <taxon>Tracheophyta</taxon>
        <taxon>Spermatophyta</taxon>
        <taxon>Magnoliopsida</taxon>
        <taxon>eudicotyledons</taxon>
        <taxon>Gunneridae</taxon>
        <taxon>Pentapetalae</taxon>
        <taxon>rosids</taxon>
        <taxon>malvids</taxon>
        <taxon>Brassicales</taxon>
        <taxon>Brassicaceae</taxon>
        <taxon>Camelineae</taxon>
        <taxon>Arabidopsis</taxon>
    </lineage>
</organism>
<accession>O48522</accession>
<name>VQ17_ARATH</name>
<gene>
    <name evidence="4" type="primary">VQ17</name>
    <name evidence="7" type="ordered locus">At2g42140</name>
    <name evidence="8" type="ORF">T24P15.5</name>
</gene>
<proteinExistence type="evidence at transcript level"/>